<gene>
    <name evidence="1" type="primary">glmU</name>
    <name type="ordered locus">EFER_4028</name>
</gene>
<name>GLMU_ESCF3</name>
<evidence type="ECO:0000255" key="1">
    <source>
        <dbReference type="HAMAP-Rule" id="MF_01631"/>
    </source>
</evidence>
<accession>B7LK74</accession>
<organism>
    <name type="scientific">Escherichia fergusonii (strain ATCC 35469 / DSM 13698 / CCUG 18766 / IAM 14443 / JCM 21226 / LMG 7866 / NBRC 102419 / NCTC 12128 / CDC 0568-73)</name>
    <dbReference type="NCBI Taxonomy" id="585054"/>
    <lineage>
        <taxon>Bacteria</taxon>
        <taxon>Pseudomonadati</taxon>
        <taxon>Pseudomonadota</taxon>
        <taxon>Gammaproteobacteria</taxon>
        <taxon>Enterobacterales</taxon>
        <taxon>Enterobacteriaceae</taxon>
        <taxon>Escherichia</taxon>
    </lineage>
</organism>
<comment type="function">
    <text evidence="1">Catalyzes the last two sequential reactions in the de novo biosynthetic pathway for UDP-N-acetylglucosamine (UDP-GlcNAc). The C-terminal domain catalyzes the transfer of acetyl group from acetyl coenzyme A to glucosamine-1-phosphate (GlcN-1-P) to produce N-acetylglucosamine-1-phosphate (GlcNAc-1-P), which is converted into UDP-GlcNAc by the transfer of uridine 5-monophosphate (from uridine 5-triphosphate), a reaction catalyzed by the N-terminal domain.</text>
</comment>
<comment type="catalytic activity">
    <reaction evidence="1">
        <text>alpha-D-glucosamine 1-phosphate + acetyl-CoA = N-acetyl-alpha-D-glucosamine 1-phosphate + CoA + H(+)</text>
        <dbReference type="Rhea" id="RHEA:13725"/>
        <dbReference type="ChEBI" id="CHEBI:15378"/>
        <dbReference type="ChEBI" id="CHEBI:57287"/>
        <dbReference type="ChEBI" id="CHEBI:57288"/>
        <dbReference type="ChEBI" id="CHEBI:57776"/>
        <dbReference type="ChEBI" id="CHEBI:58516"/>
        <dbReference type="EC" id="2.3.1.157"/>
    </reaction>
</comment>
<comment type="catalytic activity">
    <reaction evidence="1">
        <text>N-acetyl-alpha-D-glucosamine 1-phosphate + UTP + H(+) = UDP-N-acetyl-alpha-D-glucosamine + diphosphate</text>
        <dbReference type="Rhea" id="RHEA:13509"/>
        <dbReference type="ChEBI" id="CHEBI:15378"/>
        <dbReference type="ChEBI" id="CHEBI:33019"/>
        <dbReference type="ChEBI" id="CHEBI:46398"/>
        <dbReference type="ChEBI" id="CHEBI:57705"/>
        <dbReference type="ChEBI" id="CHEBI:57776"/>
        <dbReference type="EC" id="2.7.7.23"/>
    </reaction>
</comment>
<comment type="cofactor">
    <cofactor evidence="1">
        <name>Mg(2+)</name>
        <dbReference type="ChEBI" id="CHEBI:18420"/>
    </cofactor>
    <text evidence="1">Binds 1 Mg(2+) ion per subunit.</text>
</comment>
<comment type="pathway">
    <text evidence="1">Nucleotide-sugar biosynthesis; UDP-N-acetyl-alpha-D-glucosamine biosynthesis; N-acetyl-alpha-D-glucosamine 1-phosphate from alpha-D-glucosamine 6-phosphate (route II): step 2/2.</text>
</comment>
<comment type="pathway">
    <text evidence="1">Nucleotide-sugar biosynthesis; UDP-N-acetyl-alpha-D-glucosamine biosynthesis; UDP-N-acetyl-alpha-D-glucosamine from N-acetyl-alpha-D-glucosamine 1-phosphate: step 1/1.</text>
</comment>
<comment type="pathway">
    <text evidence="1">Bacterial outer membrane biogenesis; LPS lipid A biosynthesis.</text>
</comment>
<comment type="subunit">
    <text evidence="1">Homotrimer.</text>
</comment>
<comment type="subcellular location">
    <subcellularLocation>
        <location evidence="1">Cytoplasm</location>
    </subcellularLocation>
</comment>
<comment type="similarity">
    <text evidence="1">In the N-terminal section; belongs to the N-acetylglucosamine-1-phosphate uridyltransferase family.</text>
</comment>
<comment type="similarity">
    <text evidence="1">In the C-terminal section; belongs to the transferase hexapeptide repeat family.</text>
</comment>
<feature type="chain" id="PRO_1000186453" description="Bifunctional protein GlmU">
    <location>
        <begin position="1"/>
        <end position="456"/>
    </location>
</feature>
<feature type="region of interest" description="Pyrophosphorylase" evidence="1">
    <location>
        <begin position="1"/>
        <end position="229"/>
    </location>
</feature>
<feature type="region of interest" description="Linker" evidence="1">
    <location>
        <begin position="230"/>
        <end position="250"/>
    </location>
</feature>
<feature type="region of interest" description="N-acetyltransferase" evidence="1">
    <location>
        <begin position="251"/>
        <end position="456"/>
    </location>
</feature>
<feature type="active site" description="Proton acceptor" evidence="1">
    <location>
        <position position="363"/>
    </location>
</feature>
<feature type="binding site" evidence="1">
    <location>
        <begin position="11"/>
        <end position="14"/>
    </location>
    <ligand>
        <name>UDP-N-acetyl-alpha-D-glucosamine</name>
        <dbReference type="ChEBI" id="CHEBI:57705"/>
    </ligand>
</feature>
<feature type="binding site" evidence="1">
    <location>
        <position position="25"/>
    </location>
    <ligand>
        <name>UDP-N-acetyl-alpha-D-glucosamine</name>
        <dbReference type="ChEBI" id="CHEBI:57705"/>
    </ligand>
</feature>
<feature type="binding site" evidence="1">
    <location>
        <position position="76"/>
    </location>
    <ligand>
        <name>UDP-N-acetyl-alpha-D-glucosamine</name>
        <dbReference type="ChEBI" id="CHEBI:57705"/>
    </ligand>
</feature>
<feature type="binding site" evidence="1">
    <location>
        <begin position="81"/>
        <end position="82"/>
    </location>
    <ligand>
        <name>UDP-N-acetyl-alpha-D-glucosamine</name>
        <dbReference type="ChEBI" id="CHEBI:57705"/>
    </ligand>
</feature>
<feature type="binding site" evidence="1">
    <location>
        <begin position="103"/>
        <end position="105"/>
    </location>
    <ligand>
        <name>UDP-N-acetyl-alpha-D-glucosamine</name>
        <dbReference type="ChEBI" id="CHEBI:57705"/>
    </ligand>
</feature>
<feature type="binding site" evidence="1">
    <location>
        <position position="105"/>
    </location>
    <ligand>
        <name>Mg(2+)</name>
        <dbReference type="ChEBI" id="CHEBI:18420"/>
    </ligand>
</feature>
<feature type="binding site" evidence="1">
    <location>
        <position position="140"/>
    </location>
    <ligand>
        <name>UDP-N-acetyl-alpha-D-glucosamine</name>
        <dbReference type="ChEBI" id="CHEBI:57705"/>
    </ligand>
</feature>
<feature type="binding site" evidence="1">
    <location>
        <position position="154"/>
    </location>
    <ligand>
        <name>UDP-N-acetyl-alpha-D-glucosamine</name>
        <dbReference type="ChEBI" id="CHEBI:57705"/>
    </ligand>
</feature>
<feature type="binding site" evidence="1">
    <location>
        <position position="169"/>
    </location>
    <ligand>
        <name>UDP-N-acetyl-alpha-D-glucosamine</name>
        <dbReference type="ChEBI" id="CHEBI:57705"/>
    </ligand>
</feature>
<feature type="binding site" evidence="1">
    <location>
        <position position="227"/>
    </location>
    <ligand>
        <name>Mg(2+)</name>
        <dbReference type="ChEBI" id="CHEBI:18420"/>
    </ligand>
</feature>
<feature type="binding site" evidence="1">
    <location>
        <position position="227"/>
    </location>
    <ligand>
        <name>UDP-N-acetyl-alpha-D-glucosamine</name>
        <dbReference type="ChEBI" id="CHEBI:57705"/>
    </ligand>
</feature>
<feature type="binding site" evidence="1">
    <location>
        <position position="333"/>
    </location>
    <ligand>
        <name>UDP-N-acetyl-alpha-D-glucosamine</name>
        <dbReference type="ChEBI" id="CHEBI:57705"/>
    </ligand>
</feature>
<feature type="binding site" evidence="1">
    <location>
        <position position="351"/>
    </location>
    <ligand>
        <name>UDP-N-acetyl-alpha-D-glucosamine</name>
        <dbReference type="ChEBI" id="CHEBI:57705"/>
    </ligand>
</feature>
<feature type="binding site" evidence="1">
    <location>
        <position position="366"/>
    </location>
    <ligand>
        <name>UDP-N-acetyl-alpha-D-glucosamine</name>
        <dbReference type="ChEBI" id="CHEBI:57705"/>
    </ligand>
</feature>
<feature type="binding site" evidence="1">
    <location>
        <position position="377"/>
    </location>
    <ligand>
        <name>UDP-N-acetyl-alpha-D-glucosamine</name>
        <dbReference type="ChEBI" id="CHEBI:57705"/>
    </ligand>
</feature>
<feature type="binding site" evidence="1">
    <location>
        <position position="380"/>
    </location>
    <ligand>
        <name>acetyl-CoA</name>
        <dbReference type="ChEBI" id="CHEBI:57288"/>
    </ligand>
</feature>
<feature type="binding site" evidence="1">
    <location>
        <begin position="386"/>
        <end position="387"/>
    </location>
    <ligand>
        <name>acetyl-CoA</name>
        <dbReference type="ChEBI" id="CHEBI:57288"/>
    </ligand>
</feature>
<feature type="binding site" evidence="1">
    <location>
        <position position="405"/>
    </location>
    <ligand>
        <name>acetyl-CoA</name>
        <dbReference type="ChEBI" id="CHEBI:57288"/>
    </ligand>
</feature>
<feature type="binding site" evidence="1">
    <location>
        <position position="423"/>
    </location>
    <ligand>
        <name>acetyl-CoA</name>
        <dbReference type="ChEBI" id="CHEBI:57288"/>
    </ligand>
</feature>
<feature type="binding site" evidence="1">
    <location>
        <position position="440"/>
    </location>
    <ligand>
        <name>acetyl-CoA</name>
        <dbReference type="ChEBI" id="CHEBI:57288"/>
    </ligand>
</feature>
<sequence>MLNNAMSVVILAAGKGTRMYSDLPKVLHTLAGKAMVQHVIDAANELGAAHVHLVYGHGGDLLKQALKDDNLNWVLQAEQLGTGHAMQQAAPFFADDEDILMLYGDVPLISVETLQRLRDAKPQGGIGLLTVKLDDPTGYGRITRENGKVTGIVEHKDATDEQRQIQEINTGILIANGADMKRWLAKLTNNNAQGEYYITDIIALAYQEGREIVAVHPQRLSEVEGVNNRLQLSRLERVYQSEQAEKLLLAGVMLRDPARFDLRGTLTHGRDVEIDTNVIIEGNVTLGHRVKIGTGCVIKNSVIGDDCEISPYTVVEDAHLAAACTIGPFARLRPGAELLEGAHVGNFVEMKKARLGKGSKAGHLTYLGDAEIGDNVNIGAGTITCNYDGANKFKTIIGDDVFVGSDTQLVAPVTVGKGATIAAGTTVTRNVGENALAISRVPQTQKEGWRRPVKKK</sequence>
<protein>
    <recommendedName>
        <fullName evidence="1">Bifunctional protein GlmU</fullName>
    </recommendedName>
    <domain>
        <recommendedName>
            <fullName evidence="1">UDP-N-acetylglucosamine pyrophosphorylase</fullName>
            <ecNumber evidence="1">2.7.7.23</ecNumber>
        </recommendedName>
        <alternativeName>
            <fullName evidence="1">N-acetylglucosamine-1-phosphate uridyltransferase</fullName>
        </alternativeName>
    </domain>
    <domain>
        <recommendedName>
            <fullName evidence="1">Glucosamine-1-phosphate N-acetyltransferase</fullName>
            <ecNumber evidence="1">2.3.1.157</ecNumber>
        </recommendedName>
    </domain>
</protein>
<reference key="1">
    <citation type="journal article" date="2009" name="PLoS Genet.">
        <title>Organised genome dynamics in the Escherichia coli species results in highly diverse adaptive paths.</title>
        <authorList>
            <person name="Touchon M."/>
            <person name="Hoede C."/>
            <person name="Tenaillon O."/>
            <person name="Barbe V."/>
            <person name="Baeriswyl S."/>
            <person name="Bidet P."/>
            <person name="Bingen E."/>
            <person name="Bonacorsi S."/>
            <person name="Bouchier C."/>
            <person name="Bouvet O."/>
            <person name="Calteau A."/>
            <person name="Chiapello H."/>
            <person name="Clermont O."/>
            <person name="Cruveiller S."/>
            <person name="Danchin A."/>
            <person name="Diard M."/>
            <person name="Dossat C."/>
            <person name="Karoui M.E."/>
            <person name="Frapy E."/>
            <person name="Garry L."/>
            <person name="Ghigo J.M."/>
            <person name="Gilles A.M."/>
            <person name="Johnson J."/>
            <person name="Le Bouguenec C."/>
            <person name="Lescat M."/>
            <person name="Mangenot S."/>
            <person name="Martinez-Jehanne V."/>
            <person name="Matic I."/>
            <person name="Nassif X."/>
            <person name="Oztas S."/>
            <person name="Petit M.A."/>
            <person name="Pichon C."/>
            <person name="Rouy Z."/>
            <person name="Ruf C.S."/>
            <person name="Schneider D."/>
            <person name="Tourret J."/>
            <person name="Vacherie B."/>
            <person name="Vallenet D."/>
            <person name="Medigue C."/>
            <person name="Rocha E.P.C."/>
            <person name="Denamur E."/>
        </authorList>
    </citation>
    <scope>NUCLEOTIDE SEQUENCE [LARGE SCALE GENOMIC DNA]</scope>
    <source>
        <strain>ATCC 35469 / DSM 13698 / BCRC 15582 / CCUG 18766 / IAM 14443 / JCM 21226 / LMG 7866 / NBRC 102419 / NCTC 12128 / CDC 0568-73</strain>
    </source>
</reference>
<proteinExistence type="inferred from homology"/>
<dbReference type="EC" id="2.7.7.23" evidence="1"/>
<dbReference type="EC" id="2.3.1.157" evidence="1"/>
<dbReference type="EMBL" id="CU928158">
    <property type="protein sequence ID" value="CAQ91462.1"/>
    <property type="molecule type" value="Genomic_DNA"/>
</dbReference>
<dbReference type="RefSeq" id="WP_000933732.1">
    <property type="nucleotide sequence ID" value="NC_011740.1"/>
</dbReference>
<dbReference type="SMR" id="B7LK74"/>
<dbReference type="GeneID" id="75059622"/>
<dbReference type="KEGG" id="efe:EFER_4028"/>
<dbReference type="HOGENOM" id="CLU_029499_15_2_6"/>
<dbReference type="OrthoDB" id="9775031at2"/>
<dbReference type="UniPathway" id="UPA00113">
    <property type="reaction ID" value="UER00532"/>
</dbReference>
<dbReference type="UniPathway" id="UPA00113">
    <property type="reaction ID" value="UER00533"/>
</dbReference>
<dbReference type="UniPathway" id="UPA00973"/>
<dbReference type="Proteomes" id="UP000000745">
    <property type="component" value="Chromosome"/>
</dbReference>
<dbReference type="GO" id="GO:0005737">
    <property type="term" value="C:cytoplasm"/>
    <property type="evidence" value="ECO:0007669"/>
    <property type="project" value="UniProtKB-SubCell"/>
</dbReference>
<dbReference type="GO" id="GO:0016020">
    <property type="term" value="C:membrane"/>
    <property type="evidence" value="ECO:0007669"/>
    <property type="project" value="GOC"/>
</dbReference>
<dbReference type="GO" id="GO:0019134">
    <property type="term" value="F:glucosamine-1-phosphate N-acetyltransferase activity"/>
    <property type="evidence" value="ECO:0007669"/>
    <property type="project" value="UniProtKB-UniRule"/>
</dbReference>
<dbReference type="GO" id="GO:0000287">
    <property type="term" value="F:magnesium ion binding"/>
    <property type="evidence" value="ECO:0007669"/>
    <property type="project" value="UniProtKB-UniRule"/>
</dbReference>
<dbReference type="GO" id="GO:0003977">
    <property type="term" value="F:UDP-N-acetylglucosamine diphosphorylase activity"/>
    <property type="evidence" value="ECO:0007669"/>
    <property type="project" value="UniProtKB-UniRule"/>
</dbReference>
<dbReference type="GO" id="GO:0000902">
    <property type="term" value="P:cell morphogenesis"/>
    <property type="evidence" value="ECO:0007669"/>
    <property type="project" value="UniProtKB-UniRule"/>
</dbReference>
<dbReference type="GO" id="GO:0071555">
    <property type="term" value="P:cell wall organization"/>
    <property type="evidence" value="ECO:0007669"/>
    <property type="project" value="UniProtKB-KW"/>
</dbReference>
<dbReference type="GO" id="GO:0009245">
    <property type="term" value="P:lipid A biosynthetic process"/>
    <property type="evidence" value="ECO:0007669"/>
    <property type="project" value="UniProtKB-UniRule"/>
</dbReference>
<dbReference type="GO" id="GO:0009252">
    <property type="term" value="P:peptidoglycan biosynthetic process"/>
    <property type="evidence" value="ECO:0007669"/>
    <property type="project" value="UniProtKB-UniRule"/>
</dbReference>
<dbReference type="GO" id="GO:0008360">
    <property type="term" value="P:regulation of cell shape"/>
    <property type="evidence" value="ECO:0007669"/>
    <property type="project" value="UniProtKB-KW"/>
</dbReference>
<dbReference type="GO" id="GO:0006048">
    <property type="term" value="P:UDP-N-acetylglucosamine biosynthetic process"/>
    <property type="evidence" value="ECO:0007669"/>
    <property type="project" value="UniProtKB-UniPathway"/>
</dbReference>
<dbReference type="CDD" id="cd02540">
    <property type="entry name" value="GT2_GlmU_N_bac"/>
    <property type="match status" value="1"/>
</dbReference>
<dbReference type="CDD" id="cd03353">
    <property type="entry name" value="LbH_GlmU_C"/>
    <property type="match status" value="1"/>
</dbReference>
<dbReference type="FunFam" id="2.160.10.10:FF:000011">
    <property type="entry name" value="Bifunctional protein GlmU"/>
    <property type="match status" value="1"/>
</dbReference>
<dbReference type="FunFam" id="3.90.550.10:FF:000006">
    <property type="entry name" value="Bifunctional protein GlmU"/>
    <property type="match status" value="1"/>
</dbReference>
<dbReference type="Gene3D" id="2.160.10.10">
    <property type="entry name" value="Hexapeptide repeat proteins"/>
    <property type="match status" value="1"/>
</dbReference>
<dbReference type="Gene3D" id="3.90.550.10">
    <property type="entry name" value="Spore Coat Polysaccharide Biosynthesis Protein SpsA, Chain A"/>
    <property type="match status" value="1"/>
</dbReference>
<dbReference type="HAMAP" id="MF_01631">
    <property type="entry name" value="GlmU"/>
    <property type="match status" value="1"/>
</dbReference>
<dbReference type="InterPro" id="IPR005882">
    <property type="entry name" value="Bifunctional_GlmU"/>
</dbReference>
<dbReference type="InterPro" id="IPR050065">
    <property type="entry name" value="GlmU-like"/>
</dbReference>
<dbReference type="InterPro" id="IPR038009">
    <property type="entry name" value="GlmU_C_LbH"/>
</dbReference>
<dbReference type="InterPro" id="IPR001451">
    <property type="entry name" value="Hexapep"/>
</dbReference>
<dbReference type="InterPro" id="IPR018357">
    <property type="entry name" value="Hexapep_transf_CS"/>
</dbReference>
<dbReference type="InterPro" id="IPR025877">
    <property type="entry name" value="MobA-like_NTP_Trfase"/>
</dbReference>
<dbReference type="InterPro" id="IPR029044">
    <property type="entry name" value="Nucleotide-diphossugar_trans"/>
</dbReference>
<dbReference type="InterPro" id="IPR011004">
    <property type="entry name" value="Trimer_LpxA-like_sf"/>
</dbReference>
<dbReference type="NCBIfam" id="TIGR01173">
    <property type="entry name" value="glmU"/>
    <property type="match status" value="1"/>
</dbReference>
<dbReference type="NCBIfam" id="NF006986">
    <property type="entry name" value="PRK09451.1"/>
    <property type="match status" value="1"/>
</dbReference>
<dbReference type="PANTHER" id="PTHR43584:SF3">
    <property type="entry name" value="BIFUNCTIONAL PROTEIN GLMU"/>
    <property type="match status" value="1"/>
</dbReference>
<dbReference type="PANTHER" id="PTHR43584">
    <property type="entry name" value="NUCLEOTIDYL TRANSFERASE"/>
    <property type="match status" value="1"/>
</dbReference>
<dbReference type="Pfam" id="PF00132">
    <property type="entry name" value="Hexapep"/>
    <property type="match status" value="1"/>
</dbReference>
<dbReference type="Pfam" id="PF12804">
    <property type="entry name" value="NTP_transf_3"/>
    <property type="match status" value="1"/>
</dbReference>
<dbReference type="SUPFAM" id="SSF53448">
    <property type="entry name" value="Nucleotide-diphospho-sugar transferases"/>
    <property type="match status" value="1"/>
</dbReference>
<dbReference type="SUPFAM" id="SSF51161">
    <property type="entry name" value="Trimeric LpxA-like enzymes"/>
    <property type="match status" value="1"/>
</dbReference>
<dbReference type="PROSITE" id="PS00101">
    <property type="entry name" value="HEXAPEP_TRANSFERASES"/>
    <property type="match status" value="1"/>
</dbReference>
<keyword id="KW-0012">Acyltransferase</keyword>
<keyword id="KW-0133">Cell shape</keyword>
<keyword id="KW-0961">Cell wall biogenesis/degradation</keyword>
<keyword id="KW-0963">Cytoplasm</keyword>
<keyword id="KW-0460">Magnesium</keyword>
<keyword id="KW-0479">Metal-binding</keyword>
<keyword id="KW-0511">Multifunctional enzyme</keyword>
<keyword id="KW-0548">Nucleotidyltransferase</keyword>
<keyword id="KW-0573">Peptidoglycan synthesis</keyword>
<keyword id="KW-0677">Repeat</keyword>
<keyword id="KW-0808">Transferase</keyword>